<organism>
    <name type="scientific">Influenza A virus (strain A/Swine/Iowa/17672/1988 H1N1)</name>
    <dbReference type="NCBI Taxonomy" id="380341"/>
    <lineage>
        <taxon>Viruses</taxon>
        <taxon>Riboviria</taxon>
        <taxon>Orthornavirae</taxon>
        <taxon>Negarnaviricota</taxon>
        <taxon>Polyploviricotina</taxon>
        <taxon>Insthoviricetes</taxon>
        <taxon>Articulavirales</taxon>
        <taxon>Orthomyxoviridae</taxon>
        <taxon>Alphainfluenzavirus</taxon>
        <taxon>Alphainfluenzavirus influenzae</taxon>
        <taxon>Influenza A virus</taxon>
    </lineage>
</organism>
<evidence type="ECO:0000255" key="1">
    <source>
        <dbReference type="HAMAP-Rule" id="MF_04068"/>
    </source>
</evidence>
<reference key="1">
    <citation type="journal article" date="1991" name="J. Virol.">
        <title>Evolutionary analysis of the influenza A virus M gene with comparison of the M1 and M2 proteins.</title>
        <authorList>
            <person name="Ito T."/>
            <person name="Gorman O.T."/>
            <person name="Kawaoka Y."/>
            <person name="Bean W.J."/>
            <person name="Webster R.G."/>
        </authorList>
    </citation>
    <scope>NUCLEOTIDE SEQUENCE [GENOMIC RNA]</scope>
</reference>
<name>M1_I88A5</name>
<comment type="function">
    <text evidence="1">Plays critical roles in virus replication, from virus entry and uncoating to assembly and budding of the virus particle. M1 binding to ribonucleocapsids (RNPs) in nucleus seems to inhibit viral transcription. Interaction of viral NEP with M1-RNP is thought to promote nuclear export of the complex, which is targeted to the virion assembly site at the apical plasma membrane in polarized epithelial cells. Interactions with NA and HA may bring M1, a non-raft-associated protein, into lipid rafts. Forms a continuous shell on the inner side of the lipid bilayer in virion, where it binds the RNP. During virus entry into cell, the M2 ion channel acidifies the internal virion core, inducing M1 dissociation from the RNP. M1-free RNPs are transported to the nucleus, where viral transcription and replication can take place.</text>
</comment>
<comment type="function">
    <text evidence="1">Determines the virion's shape: spherical or filamentous. Clinical isolates of influenza are characterized by the presence of significant proportion of filamentous virions, whereas after multiple passage on eggs or cell culture, virions have only spherical morphology. Filamentous virions are thought to be important to infect neighboring cells, and spherical virions more suited to spread through aerosol between hosts organisms.</text>
</comment>
<comment type="subunit">
    <text evidence="1">Homodimer and homomultimer. Interacts with NEP. Binds ribonucleocapsid by both interacting with genomic RNA and NP protein. May interact with HA and NA. Cannot bind NP without genomic RNA.</text>
</comment>
<comment type="subcellular location">
    <subcellularLocation>
        <location evidence="1">Virion membrane</location>
        <topology evidence="1">Peripheral membrane protein</topology>
        <orientation evidence="1">Cytoplasmic side</orientation>
    </subcellularLocation>
    <subcellularLocation>
        <location evidence="1">Host nucleus</location>
    </subcellularLocation>
</comment>
<comment type="alternative products">
    <event type="alternative splicing"/>
    <isoform>
        <id>Q67187-1</id>
        <name>M1</name>
        <sequence type="displayed"/>
    </isoform>
    <isoform>
        <id>Q67186-1</id>
        <name>M2</name>
        <sequence type="external"/>
    </isoform>
    <text>Only the first 9 residues are shared by the 2 isoforms.</text>
</comment>
<comment type="miscellaneous">
    <text evidence="1">Most abundant protein in virion. When expressed alone can form virus-like particles in transfected cells.</text>
</comment>
<comment type="similarity">
    <text evidence="1">Belongs to the influenza viruses Matrix protein M1 family.</text>
</comment>
<accession>Q67187</accession>
<feature type="chain" id="PRO_0000326328" description="Matrix protein 1">
    <location>
        <begin position="1"/>
        <end position="252"/>
    </location>
</feature>
<feature type="region of interest" description="Membrane-binding" evidence="1">
    <location>
        <begin position="1"/>
        <end position="164"/>
    </location>
</feature>
<feature type="region of interest" description="RNP-binding" evidence="1">
    <location>
        <begin position="165"/>
        <end position="252"/>
    </location>
</feature>
<feature type="short sequence motif" description="Nuclear localization signal" evidence="1">
    <location>
        <begin position="101"/>
        <end position="105"/>
    </location>
</feature>
<proteinExistence type="inferred from homology"/>
<dbReference type="EMBL" id="M63522">
    <property type="protein sequence ID" value="AAA43318.1"/>
    <property type="molecule type" value="Genomic_RNA"/>
</dbReference>
<dbReference type="SMR" id="Q67187"/>
<dbReference type="GO" id="GO:0042025">
    <property type="term" value="C:host cell nucleus"/>
    <property type="evidence" value="ECO:0007669"/>
    <property type="project" value="UniProtKB-SubCell"/>
</dbReference>
<dbReference type="GO" id="GO:0016020">
    <property type="term" value="C:membrane"/>
    <property type="evidence" value="ECO:0007669"/>
    <property type="project" value="UniProtKB-KW"/>
</dbReference>
<dbReference type="GO" id="GO:0055036">
    <property type="term" value="C:virion membrane"/>
    <property type="evidence" value="ECO:0007669"/>
    <property type="project" value="UniProtKB-SubCell"/>
</dbReference>
<dbReference type="GO" id="GO:0003723">
    <property type="term" value="F:RNA binding"/>
    <property type="evidence" value="ECO:0007669"/>
    <property type="project" value="UniProtKB-UniRule"/>
</dbReference>
<dbReference type="GO" id="GO:0039660">
    <property type="term" value="F:structural constituent of virion"/>
    <property type="evidence" value="ECO:0007669"/>
    <property type="project" value="UniProtKB-UniRule"/>
</dbReference>
<dbReference type="GO" id="GO:0046761">
    <property type="term" value="P:viral budding from plasma membrane"/>
    <property type="evidence" value="ECO:0007669"/>
    <property type="project" value="UniProtKB-UniRule"/>
</dbReference>
<dbReference type="FunFam" id="1.10.10.180:FF:000001">
    <property type="entry name" value="Matrix protein 1"/>
    <property type="match status" value="1"/>
</dbReference>
<dbReference type="FunFam" id="1.20.91.10:FF:000001">
    <property type="entry name" value="Matrix protein 1"/>
    <property type="match status" value="1"/>
</dbReference>
<dbReference type="Gene3D" id="1.10.10.180">
    <property type="match status" value="1"/>
</dbReference>
<dbReference type="Gene3D" id="1.20.91.10">
    <property type="match status" value="1"/>
</dbReference>
<dbReference type="HAMAP" id="MF_04068">
    <property type="entry name" value="INFV_M1"/>
    <property type="match status" value="1"/>
</dbReference>
<dbReference type="InterPro" id="IPR036039">
    <property type="entry name" value="Flu_matrix_M1"/>
</dbReference>
<dbReference type="InterPro" id="IPR013188">
    <property type="entry name" value="Flu_matrix_M1_C"/>
</dbReference>
<dbReference type="InterPro" id="IPR001561">
    <property type="entry name" value="Flu_matrix_M1_N"/>
</dbReference>
<dbReference type="InterPro" id="IPR015423">
    <property type="entry name" value="Flu_matrix_M1_N_sub1"/>
</dbReference>
<dbReference type="InterPro" id="IPR015799">
    <property type="entry name" value="Flu_matrix_M1_N_sub2"/>
</dbReference>
<dbReference type="InterPro" id="IPR037533">
    <property type="entry name" value="INFV_M1"/>
</dbReference>
<dbReference type="Pfam" id="PF00598">
    <property type="entry name" value="Flu_M1"/>
    <property type="match status" value="1"/>
</dbReference>
<dbReference type="Pfam" id="PF08289">
    <property type="entry name" value="Flu_M1_C"/>
    <property type="match status" value="1"/>
</dbReference>
<dbReference type="SMART" id="SM00759">
    <property type="entry name" value="Flu_M1_C"/>
    <property type="match status" value="1"/>
</dbReference>
<dbReference type="SUPFAM" id="SSF48145">
    <property type="entry name" value="Influenza virus matrix protein M1"/>
    <property type="match status" value="1"/>
</dbReference>
<keyword id="KW-0025">Alternative splicing</keyword>
<keyword id="KW-1048">Host nucleus</keyword>
<keyword id="KW-0472">Membrane</keyword>
<keyword id="KW-0694">RNA-binding</keyword>
<keyword id="KW-0468">Viral matrix protein</keyword>
<keyword id="KW-0946">Virion</keyword>
<sequence length="252" mass="27882">MSLLTEVETYVLSIVPSGPLKAEIAQRLEDVFAGKNTDLEALMEWLKTRPILSPLTKGILGFVFTLTVPSERGLQRRRFVQNALNGNGDPNNMDKAVKLYRKLKREITFHGAKEVALSYSAGALASCMGLIYNRMGTVTTEVAFGLVCATCEQIADSQHRSHRQMETTTNPLIRHENRMVLASTTAKAMEQMAGSSEQAAEAMEVASQARQMVQAMRTIGTHPSSSAGLKDDLLENLQAYQKRMGVQMQRFK</sequence>
<organismHost>
    <name type="scientific">Aves</name>
    <dbReference type="NCBI Taxonomy" id="8782"/>
</organismHost>
<organismHost>
    <name type="scientific">Homo sapiens</name>
    <name type="common">Human</name>
    <dbReference type="NCBI Taxonomy" id="9606"/>
</organismHost>
<organismHost>
    <name type="scientific">Sus scrofa</name>
    <name type="common">Pig</name>
    <dbReference type="NCBI Taxonomy" id="9823"/>
</organismHost>
<protein>
    <recommendedName>
        <fullName evidence="1">Matrix protein 1</fullName>
        <shortName evidence="1">M1</shortName>
    </recommendedName>
</protein>
<gene>
    <name evidence="1" type="primary">M</name>
</gene>